<feature type="chain" id="PRO_0000183754" description="Cytochrome c oxidase subunit 3">
    <location>
        <begin position="1"/>
        <end position="261"/>
    </location>
</feature>
<feature type="topological domain" description="Mitochondrial matrix" evidence="1">
    <location>
        <begin position="1"/>
        <end position="15"/>
    </location>
</feature>
<feature type="transmembrane region" description="Helical; Name=I" evidence="1">
    <location>
        <begin position="16"/>
        <end position="34"/>
    </location>
</feature>
<feature type="topological domain" description="Mitochondrial intermembrane" evidence="1">
    <location>
        <begin position="35"/>
        <end position="40"/>
    </location>
</feature>
<feature type="transmembrane region" description="Helical; Name=II" evidence="1">
    <location>
        <begin position="41"/>
        <end position="66"/>
    </location>
</feature>
<feature type="topological domain" description="Mitochondrial matrix" evidence="1">
    <location>
        <begin position="67"/>
        <end position="72"/>
    </location>
</feature>
<feature type="transmembrane region" description="Helical; Name=III" evidence="1">
    <location>
        <begin position="73"/>
        <end position="105"/>
    </location>
</feature>
<feature type="topological domain" description="Mitochondrial intermembrane" evidence="1">
    <location>
        <begin position="106"/>
        <end position="128"/>
    </location>
</feature>
<feature type="transmembrane region" description="Helical; Name=IV" evidence="1">
    <location>
        <begin position="129"/>
        <end position="152"/>
    </location>
</feature>
<feature type="topological domain" description="Mitochondrial matrix" evidence="1">
    <location>
        <begin position="153"/>
        <end position="155"/>
    </location>
</feature>
<feature type="transmembrane region" description="Helical; Name=V" evidence="1">
    <location>
        <begin position="156"/>
        <end position="183"/>
    </location>
</feature>
<feature type="topological domain" description="Mitochondrial intermembrane" evidence="1">
    <location>
        <begin position="184"/>
        <end position="190"/>
    </location>
</feature>
<feature type="transmembrane region" description="Helical; Name=VI" evidence="1">
    <location>
        <begin position="191"/>
        <end position="223"/>
    </location>
</feature>
<feature type="topological domain" description="Mitochondrial matrix" evidence="1">
    <location>
        <begin position="224"/>
        <end position="232"/>
    </location>
</feature>
<feature type="transmembrane region" description="Helical; Name=VII" evidence="1">
    <location>
        <begin position="233"/>
        <end position="256"/>
    </location>
</feature>
<feature type="topological domain" description="Mitochondrial intermembrane" evidence="1">
    <location>
        <begin position="257"/>
        <end position="261"/>
    </location>
</feature>
<feature type="sequence conflict" description="In Ref. 2; AAA99828." evidence="3" ref="2">
    <original>F</original>
    <variation>L</variation>
    <location>
        <position position="171"/>
    </location>
</feature>
<protein>
    <recommendedName>
        <fullName>Cytochrome c oxidase subunit 3</fullName>
        <ecNumber>7.1.1.9</ecNumber>
    </recommendedName>
    <alternativeName>
        <fullName>Cytochrome c oxidase polypeptide III</fullName>
    </alternativeName>
</protein>
<sequence length="261" mass="29674">MAHQAHAYHMVDPSPWPLTGAIAALLMTSGLAIWFHFHSTTLMTLGLILLLLTMYQWWRDIIREGTFQGHHTPPVQKGLRYGMILFITSEVFFFLGFFWAFYHSSLAPTPELGGCWPPTGITPLDPFEVPLLNTAVLLASGVTVTWAHHSIMEGERKQAIQSLALTILLGFYFTALQAMEYYEAPFTIADGVYGSTFFVATGFHGLHVIIGSTFLAVCLLRQIQYHFTSEHHFGFEAAAWYWHFVDVVWLFLYVSIYWWGS</sequence>
<evidence type="ECO:0000250" key="1">
    <source>
        <dbReference type="UniProtKB" id="P00415"/>
    </source>
</evidence>
<evidence type="ECO:0000250" key="2">
    <source>
        <dbReference type="UniProtKB" id="P00420"/>
    </source>
</evidence>
<evidence type="ECO:0000305" key="3"/>
<organism>
    <name type="scientific">Carassius auratus</name>
    <name type="common">Goldfish</name>
    <dbReference type="NCBI Taxonomy" id="7957"/>
    <lineage>
        <taxon>Eukaryota</taxon>
        <taxon>Metazoa</taxon>
        <taxon>Chordata</taxon>
        <taxon>Craniata</taxon>
        <taxon>Vertebrata</taxon>
        <taxon>Euteleostomi</taxon>
        <taxon>Actinopterygii</taxon>
        <taxon>Neopterygii</taxon>
        <taxon>Teleostei</taxon>
        <taxon>Ostariophysi</taxon>
        <taxon>Cypriniformes</taxon>
        <taxon>Cyprinidae</taxon>
        <taxon>Cyprininae</taxon>
        <taxon>Carassius</taxon>
    </lineage>
</organism>
<comment type="function">
    <text evidence="2">Component of the cytochrome c oxidase, the last enzyme in the mitochondrial electron transport chain which drives oxidative phosphorylation. The respiratory chain contains 3 multisubunit complexes succinate dehydrogenase (complex II, CII), ubiquinol-cytochrome c oxidoreductase (cytochrome b-c1 complex, complex III, CIII) and cytochrome c oxidase (complex IV, CIV), that cooperate to transfer electrons derived from NADH and succinate to molecular oxygen, creating an electrochemical gradient over the inner membrane that drives transmembrane transport and the ATP synthase. Cytochrome c oxidase is the component of the respiratory chain that catalyzes the reduction of oxygen to water. Electrons originating from reduced cytochrome c in the intermembrane space (IMS) are transferred via the dinuclear copper A center (CU(A)) of subunit 2 and heme A of subunit 1 to the active site in subunit 1, a binuclear center (BNC) formed by heme A3 and copper B (CU(B)). The BNC reduces molecular oxygen to 2 water molecules using 4 electrons from cytochrome c in the IMS and 4 protons from the mitochondrial matrix.</text>
</comment>
<comment type="catalytic activity">
    <reaction evidence="2">
        <text>4 Fe(II)-[cytochrome c] + O2 + 8 H(+)(in) = 4 Fe(III)-[cytochrome c] + 2 H2O + 4 H(+)(out)</text>
        <dbReference type="Rhea" id="RHEA:11436"/>
        <dbReference type="Rhea" id="RHEA-COMP:10350"/>
        <dbReference type="Rhea" id="RHEA-COMP:14399"/>
        <dbReference type="ChEBI" id="CHEBI:15377"/>
        <dbReference type="ChEBI" id="CHEBI:15378"/>
        <dbReference type="ChEBI" id="CHEBI:15379"/>
        <dbReference type="ChEBI" id="CHEBI:29033"/>
        <dbReference type="ChEBI" id="CHEBI:29034"/>
        <dbReference type="EC" id="7.1.1.9"/>
    </reaction>
    <physiologicalReaction direction="left-to-right" evidence="2">
        <dbReference type="Rhea" id="RHEA:11437"/>
    </physiologicalReaction>
</comment>
<comment type="subunit">
    <text evidence="1">Component of the cytochrome c oxidase (complex IV, CIV), a multisubunit enzyme composed of 14 subunits. The complex is composed of a catalytic core of 3 subunits MT-CO1, MT-CO2 and MT-CO3, encoded in the mitochondrial DNA, and 11 supernumerary subunits COX4I, COX5A, COX5B, COX6A, COX6B, COX6C, COX7A, COX7B, COX7C, COX8 and NDUFA4, which are encoded in the nuclear genome. The complex exists as a monomer or a dimer and forms supercomplexes (SCs) in the inner mitochondrial membrane with NADH-ubiquinone oxidoreductase (complex I, CI) and ubiquinol-cytochrome c oxidoreductase (cytochrome b-c1 complex, complex III, CIII), resulting in different assemblies (supercomplex SCI(1)III(2)IV(1) and megacomplex MCI(2)III(2)IV(2)).</text>
</comment>
<comment type="subcellular location">
    <subcellularLocation>
        <location evidence="1">Mitochondrion inner membrane</location>
        <topology evidence="1">Multi-pass membrane protein</topology>
    </subcellularLocation>
</comment>
<comment type="similarity">
    <text evidence="3">Belongs to the cytochrome c oxidase subunit 3 family.</text>
</comment>
<keyword id="KW-0472">Membrane</keyword>
<keyword id="KW-0496">Mitochondrion</keyword>
<keyword id="KW-0999">Mitochondrion inner membrane</keyword>
<keyword id="KW-1185">Reference proteome</keyword>
<keyword id="KW-1278">Translocase</keyword>
<keyword id="KW-0812">Transmembrane</keyword>
<keyword id="KW-1133">Transmembrane helix</keyword>
<gene>
    <name type="primary">mt-co3</name>
    <name type="synonym">coiii</name>
    <name type="synonym">coxiii</name>
    <name type="synonym">mtco3</name>
</gene>
<accession>Q96133</accession>
<accession>O78685</accession>
<reference key="1">
    <citation type="journal article" date="1998" name="Zool. Sci.">
        <title>The complete sequence of mitochondrial genome from a gynogenetic triploid 'ginbuna' (Carassius auratus langsdorfi).</title>
        <authorList>
            <person name="Murakami M."/>
            <person name="Yamashita Y."/>
            <person name="Fujitani H."/>
        </authorList>
    </citation>
    <scope>NUCLEOTIDE SEQUENCE</scope>
    <source>
        <strain>AZ3 / Langsdorfi</strain>
        <tissue>Oocyte</tissue>
    </source>
</reference>
<reference key="2">
    <citation type="submission" date="1996-05" db="EMBL/GenBank/DDBJ databases">
        <authorList>
            <person name="Lin X.-W."/>
        </authorList>
    </citation>
    <scope>NUCLEOTIDE SEQUENCE [MRNA] OF 77-261</scope>
</reference>
<geneLocation type="mitochondrion"/>
<proteinExistence type="evidence at transcript level"/>
<dbReference type="EC" id="7.1.1.9"/>
<dbReference type="EMBL" id="AB006953">
    <property type="protein sequence ID" value="BAA31244.1"/>
    <property type="molecule type" value="Genomic_DNA"/>
</dbReference>
<dbReference type="EMBL" id="U57388">
    <property type="protein sequence ID" value="AAA99828.1"/>
    <property type="molecule type" value="mRNA"/>
</dbReference>
<dbReference type="SMR" id="Q96133"/>
<dbReference type="CTD" id="4514"/>
<dbReference type="OrthoDB" id="10050457at2759"/>
<dbReference type="Proteomes" id="UP000515129">
    <property type="component" value="Mitochondrion MT"/>
</dbReference>
<dbReference type="GO" id="GO:0005743">
    <property type="term" value="C:mitochondrial inner membrane"/>
    <property type="evidence" value="ECO:0007669"/>
    <property type="project" value="UniProtKB-SubCell"/>
</dbReference>
<dbReference type="GO" id="GO:0045277">
    <property type="term" value="C:respiratory chain complex IV"/>
    <property type="evidence" value="ECO:0000250"/>
    <property type="project" value="UniProtKB"/>
</dbReference>
<dbReference type="GO" id="GO:0004129">
    <property type="term" value="F:cytochrome-c oxidase activity"/>
    <property type="evidence" value="ECO:0007669"/>
    <property type="project" value="UniProtKB-EC"/>
</dbReference>
<dbReference type="GO" id="GO:0006123">
    <property type="term" value="P:mitochondrial electron transport, cytochrome c to oxygen"/>
    <property type="evidence" value="ECO:0007669"/>
    <property type="project" value="TreeGrafter"/>
</dbReference>
<dbReference type="CDD" id="cd01665">
    <property type="entry name" value="Cyt_c_Oxidase_III"/>
    <property type="match status" value="1"/>
</dbReference>
<dbReference type="FunFam" id="1.10.287.70:FF:000048">
    <property type="entry name" value="Cytochrome c oxidase subunit 3"/>
    <property type="match status" value="1"/>
</dbReference>
<dbReference type="FunFam" id="1.20.120.80:FF:000002">
    <property type="entry name" value="Cytochrome c oxidase subunit 3"/>
    <property type="match status" value="1"/>
</dbReference>
<dbReference type="Gene3D" id="1.10.287.70">
    <property type="match status" value="1"/>
</dbReference>
<dbReference type="Gene3D" id="1.20.120.80">
    <property type="entry name" value="Cytochrome c oxidase, subunit III, four-helix bundle"/>
    <property type="match status" value="1"/>
</dbReference>
<dbReference type="InterPro" id="IPR024791">
    <property type="entry name" value="Cyt_c/ubiquinol_Oxase_su3"/>
</dbReference>
<dbReference type="InterPro" id="IPR033945">
    <property type="entry name" value="Cyt_c_oxase_su3_dom"/>
</dbReference>
<dbReference type="InterPro" id="IPR000298">
    <property type="entry name" value="Cyt_c_oxidase-like_su3"/>
</dbReference>
<dbReference type="InterPro" id="IPR035973">
    <property type="entry name" value="Cyt_c_oxidase_su3-like_sf"/>
</dbReference>
<dbReference type="InterPro" id="IPR013833">
    <property type="entry name" value="Cyt_c_oxidase_su3_a-hlx"/>
</dbReference>
<dbReference type="PANTHER" id="PTHR11403:SF7">
    <property type="entry name" value="CYTOCHROME C OXIDASE SUBUNIT 3"/>
    <property type="match status" value="1"/>
</dbReference>
<dbReference type="PANTHER" id="PTHR11403">
    <property type="entry name" value="CYTOCHROME C OXIDASE SUBUNIT III"/>
    <property type="match status" value="1"/>
</dbReference>
<dbReference type="Pfam" id="PF00510">
    <property type="entry name" value="COX3"/>
    <property type="match status" value="1"/>
</dbReference>
<dbReference type="SUPFAM" id="SSF81452">
    <property type="entry name" value="Cytochrome c oxidase subunit III-like"/>
    <property type="match status" value="1"/>
</dbReference>
<dbReference type="PROSITE" id="PS50253">
    <property type="entry name" value="COX3"/>
    <property type="match status" value="1"/>
</dbReference>
<name>COX3_CARAU</name>